<organism>
    <name type="scientific">Prochlorococcus marinus (strain MIT 9312)</name>
    <dbReference type="NCBI Taxonomy" id="74546"/>
    <lineage>
        <taxon>Bacteria</taxon>
        <taxon>Bacillati</taxon>
        <taxon>Cyanobacteriota</taxon>
        <taxon>Cyanophyceae</taxon>
        <taxon>Synechococcales</taxon>
        <taxon>Prochlorococcaceae</taxon>
        <taxon>Prochlorococcus</taxon>
    </lineage>
</organism>
<feature type="chain" id="PRO_0000243315" description="Dephospho-CoA kinase">
    <location>
        <begin position="1"/>
        <end position="205"/>
    </location>
</feature>
<feature type="domain" description="DPCK" evidence="1">
    <location>
        <begin position="13"/>
        <end position="205"/>
    </location>
</feature>
<feature type="binding site" evidence="1">
    <location>
        <begin position="21"/>
        <end position="26"/>
    </location>
    <ligand>
        <name>ATP</name>
        <dbReference type="ChEBI" id="CHEBI:30616"/>
    </ligand>
</feature>
<accession>Q31DD4</accession>
<dbReference type="EC" id="2.7.1.24" evidence="1"/>
<dbReference type="EMBL" id="CP000111">
    <property type="protein sequence ID" value="ABB49111.1"/>
    <property type="molecule type" value="Genomic_DNA"/>
</dbReference>
<dbReference type="RefSeq" id="WP_011375615.1">
    <property type="nucleotide sequence ID" value="NC_007577.1"/>
</dbReference>
<dbReference type="SMR" id="Q31DD4"/>
<dbReference type="STRING" id="74546.PMT9312_0050"/>
<dbReference type="KEGG" id="pmi:PMT9312_0050"/>
<dbReference type="eggNOG" id="COG0237">
    <property type="taxonomic scope" value="Bacteria"/>
</dbReference>
<dbReference type="HOGENOM" id="CLU_057180_0_1_3"/>
<dbReference type="OrthoDB" id="9812943at2"/>
<dbReference type="UniPathway" id="UPA00241">
    <property type="reaction ID" value="UER00356"/>
</dbReference>
<dbReference type="Proteomes" id="UP000002715">
    <property type="component" value="Chromosome"/>
</dbReference>
<dbReference type="GO" id="GO:0005737">
    <property type="term" value="C:cytoplasm"/>
    <property type="evidence" value="ECO:0007669"/>
    <property type="project" value="UniProtKB-SubCell"/>
</dbReference>
<dbReference type="GO" id="GO:0005524">
    <property type="term" value="F:ATP binding"/>
    <property type="evidence" value="ECO:0007669"/>
    <property type="project" value="UniProtKB-UniRule"/>
</dbReference>
<dbReference type="GO" id="GO:0004140">
    <property type="term" value="F:dephospho-CoA kinase activity"/>
    <property type="evidence" value="ECO:0007669"/>
    <property type="project" value="UniProtKB-UniRule"/>
</dbReference>
<dbReference type="GO" id="GO:0015937">
    <property type="term" value="P:coenzyme A biosynthetic process"/>
    <property type="evidence" value="ECO:0007669"/>
    <property type="project" value="UniProtKB-UniRule"/>
</dbReference>
<dbReference type="CDD" id="cd02022">
    <property type="entry name" value="DPCK"/>
    <property type="match status" value="1"/>
</dbReference>
<dbReference type="Gene3D" id="3.40.50.300">
    <property type="entry name" value="P-loop containing nucleotide triphosphate hydrolases"/>
    <property type="match status" value="1"/>
</dbReference>
<dbReference type="HAMAP" id="MF_00376">
    <property type="entry name" value="Dephospho_CoA_kinase"/>
    <property type="match status" value="1"/>
</dbReference>
<dbReference type="InterPro" id="IPR001977">
    <property type="entry name" value="Depp_CoAkinase"/>
</dbReference>
<dbReference type="InterPro" id="IPR027417">
    <property type="entry name" value="P-loop_NTPase"/>
</dbReference>
<dbReference type="NCBIfam" id="TIGR00152">
    <property type="entry name" value="dephospho-CoA kinase"/>
    <property type="match status" value="1"/>
</dbReference>
<dbReference type="PANTHER" id="PTHR10695:SF46">
    <property type="entry name" value="BIFUNCTIONAL COENZYME A SYNTHASE-RELATED"/>
    <property type="match status" value="1"/>
</dbReference>
<dbReference type="PANTHER" id="PTHR10695">
    <property type="entry name" value="DEPHOSPHO-COA KINASE-RELATED"/>
    <property type="match status" value="1"/>
</dbReference>
<dbReference type="Pfam" id="PF01121">
    <property type="entry name" value="CoaE"/>
    <property type="match status" value="1"/>
</dbReference>
<dbReference type="SUPFAM" id="SSF52540">
    <property type="entry name" value="P-loop containing nucleoside triphosphate hydrolases"/>
    <property type="match status" value="1"/>
</dbReference>
<dbReference type="PROSITE" id="PS51219">
    <property type="entry name" value="DPCK"/>
    <property type="match status" value="1"/>
</dbReference>
<sequence length="205" mass="24149">MDVLQKLKNNQRRIGLTGGIASGKSTITNYIRKHKNIPILDADNLSRELIKPNTYGYKKILDYFGNQIIDTKNNSEKAINRKLLRNIIFKHSESKEWIDNLLHPLVKEKMIEECIQYKNNQTIVLVIPLLFEAKFEDICTEIWLVKCPRELQKKRLITRDKISEKEAYETINLQLSFEEKSKFSDIILDNSDDQNKWINTIREIL</sequence>
<gene>
    <name evidence="1" type="primary">coaE</name>
    <name type="ordered locus">PMT9312_0050</name>
</gene>
<keyword id="KW-0067">ATP-binding</keyword>
<keyword id="KW-0173">Coenzyme A biosynthesis</keyword>
<keyword id="KW-0963">Cytoplasm</keyword>
<keyword id="KW-0418">Kinase</keyword>
<keyword id="KW-0547">Nucleotide-binding</keyword>
<keyword id="KW-0808">Transferase</keyword>
<proteinExistence type="inferred from homology"/>
<evidence type="ECO:0000255" key="1">
    <source>
        <dbReference type="HAMAP-Rule" id="MF_00376"/>
    </source>
</evidence>
<comment type="function">
    <text evidence="1">Catalyzes the phosphorylation of the 3'-hydroxyl group of dephosphocoenzyme A to form coenzyme A.</text>
</comment>
<comment type="catalytic activity">
    <reaction evidence="1">
        <text>3'-dephospho-CoA + ATP = ADP + CoA + H(+)</text>
        <dbReference type="Rhea" id="RHEA:18245"/>
        <dbReference type="ChEBI" id="CHEBI:15378"/>
        <dbReference type="ChEBI" id="CHEBI:30616"/>
        <dbReference type="ChEBI" id="CHEBI:57287"/>
        <dbReference type="ChEBI" id="CHEBI:57328"/>
        <dbReference type="ChEBI" id="CHEBI:456216"/>
        <dbReference type="EC" id="2.7.1.24"/>
    </reaction>
</comment>
<comment type="pathway">
    <text evidence="1">Cofactor biosynthesis; coenzyme A biosynthesis; CoA from (R)-pantothenate: step 5/5.</text>
</comment>
<comment type="subcellular location">
    <subcellularLocation>
        <location evidence="1">Cytoplasm</location>
    </subcellularLocation>
</comment>
<comment type="similarity">
    <text evidence="1">Belongs to the CoaE family.</text>
</comment>
<protein>
    <recommendedName>
        <fullName evidence="1">Dephospho-CoA kinase</fullName>
        <ecNumber evidence="1">2.7.1.24</ecNumber>
    </recommendedName>
    <alternativeName>
        <fullName evidence="1">Dephosphocoenzyme A kinase</fullName>
    </alternativeName>
</protein>
<reference key="1">
    <citation type="journal article" date="2006" name="Science">
        <title>Genomic islands and the ecology and evolution of Prochlorococcus.</title>
        <authorList>
            <person name="Coleman M.L."/>
            <person name="Sullivan M.B."/>
            <person name="Martiny A.C."/>
            <person name="Steglich C."/>
            <person name="Barry K."/>
            <person name="Delong E.F."/>
            <person name="Chisholm S.W."/>
        </authorList>
    </citation>
    <scope>NUCLEOTIDE SEQUENCE [LARGE SCALE GENOMIC DNA]</scope>
    <source>
        <strain>MIT 9312</strain>
    </source>
</reference>
<name>COAE_PROM9</name>